<organismHost>
    <name type="scientific">Homo sapiens</name>
    <name type="common">Human</name>
    <dbReference type="NCBI Taxonomy" id="9606"/>
</organismHost>
<comment type="function">
    <molecule>Gag polyprotein</molecule>
    <text evidence="5">Mediates, with Gag-Pol polyprotein, the essential events in virion assembly, including binding the plasma membrane, making the protein-protein interactions necessary to create spherical particles, recruiting the viral Env proteins, and packaging the genomic RNA via direct interactions with the RNA packaging sequence (Psi).</text>
</comment>
<comment type="function">
    <molecule>Matrix protein p17</molecule>
    <text evidence="1 6">Targets the polyprotein to the plasma membrane via a multipartite membrane-binding signal, that includes its myristoylated N-terminus (By similarity). Matrix protein is part of the pre-integration complex. Implicated in the release from host cell mediated by Vpu. Binds to RNA (By similarity).</text>
</comment>
<comment type="function">
    <molecule>Capsid protein p24</molecule>
    <text evidence="5 6">Forms the conical core that encapsulates the genomic RNA-nucleocapsid complex in the virion. Most core are conical, with only 7% tubular. The core is constituted by capsid protein hexamer subunits. The core is disassembled soon after virion entry (By similarity). The capsid promotes immune invasion by cloaking viral DNA from CGAS detection (By similarity). Host restriction factors such as TRIM5-alpha or TRIMCyp bind retroviral capsids and cause premature capsid disassembly, leading to blocks in reverse transcription. Capsid restriction by TRIM5 is one of the factors which restricts HIV-1 to the human species. Host PIN1 apparently facilitates the virion uncoating (By similarity). On the other hand, interactions with PDZD8 or CYPA stabilize the capsid (By similarity).</text>
</comment>
<comment type="function">
    <molecule>Nucleocapsid protein p7</molecule>
    <text evidence="5">Encapsulates and protects viral dimeric unspliced genomic RNA (gRNA). Binds these RNAs through its zinc fingers. Acts as a nucleic acid chaperone which is involved in rearangement of nucleic acid secondary structure during gRNA retrotranscription. Also facilitates template switch leading to recombination. As part of the polyprotein, participates in gRNA dimerization, packaging, tRNA incorporation and virion assembly.</text>
</comment>
<comment type="function">
    <molecule>p6-gag</molecule>
    <text evidence="6">Plays a role in budding of the assembled particle by interacting with the host class E VPS proteins TSG101 and PDCD6IP/AIP1.</text>
</comment>
<comment type="subunit">
    <molecule>Gag polyprotein</molecule>
    <text evidence="4 5">Homotrimer; further assembles as hexamers of trimers. Oligomerization possibly creates a central hole into which the cytoplasmic tail of the gp41 envelope protein may be inserted. Interacts with host TRIM22; this interaction seems to disrupt proper trafficking of Gag polyprotein and may interfere with budding. Interacts with host PDZD8. When ubiquitinated, interacts (via p6-gag domain) with host PACSIN2; this interaction allows PACSIN2 recruitment to viral assembly sites and its subsequent incorporation into virions. Interacts with MOV10 (By similarity).</text>
</comment>
<comment type="subunit">
    <molecule>Matrix protein p17</molecule>
    <text evidence="5 6">Homotrimer; further assembles as hexamers of trimers. Interacts with gp41 (via C-terminus). Interacts with host CALM1; this interaction induces a conformational change in the Matrix protein, triggering exposure of the myristate group. Interacts with host AP3D1; this interaction allows the polyprotein trafficking to multivesicular bodies during virus assembly. Part of the pre-integration complex (PIC) which is composed of viral genome, matrix protein, Vpr and integrase.</text>
</comment>
<comment type="subunit">
    <molecule>Capsid protein p24</molecule>
    <text evidence="5 6">Homodimer; the homodimer further multimerizes as homohexamers or homopentamers (By similarity). Interacts with host NUP98 (By similarity). Interacts with host PPIA/CYPA; this interaction stabilizes the capsid (By similarity). Interacts with host NUP153 (By similarity). Interacts with host PDZD8; this interaction stabilizes the capsid. Interacts with host TRIM5; this interaction destabilizes the capsid (By similarity). Interacts with host CPSF6 (By similarity). Interacts with host NONO; the interaction is weak (By similarity).</text>
</comment>
<comment type="subunit">
    <molecule>Nucleocapsid protein p7</molecule>
    <text evidence="6">Interacts with host NUP98.</text>
</comment>
<comment type="subunit">
    <molecule>p6-gag</molecule>
    <text evidence="3 6">Interacts with Vpr; this interaction allows Vpr incorporation into the virion. Interacts with host TSG101. p6-gag interacts with host PDCD6IP/AIP1.</text>
</comment>
<comment type="subcellular location">
    <molecule>Gag polyprotein</molecule>
    <subcellularLocation>
        <location evidence="6">Host cell membrane</location>
        <topology evidence="6">Lipid-anchor</topology>
    </subcellularLocation>
    <subcellularLocation>
        <location evidence="6">Host endosome</location>
        <location evidence="6">Host multivesicular body</location>
    </subcellularLocation>
    <text evidence="6">These locations are probably linked to virus assembly sites. The main location is the cell membrane, but under some circumstances, late endosomal compartments can serve as productive sites for virion assembly.</text>
</comment>
<comment type="subcellular location">
    <molecule>Matrix protein p17</molecule>
    <subcellularLocation>
        <location evidence="6">Virion membrane</location>
        <topology evidence="6">Lipid-anchor</topology>
    </subcellularLocation>
    <subcellularLocation>
        <location evidence="1">Host nucleus</location>
    </subcellularLocation>
    <subcellularLocation>
        <location evidence="1">Host cytoplasm</location>
    </subcellularLocation>
</comment>
<comment type="subcellular location">
    <molecule>Capsid protein p24</molecule>
    <subcellularLocation>
        <location evidence="6">Virion</location>
    </subcellularLocation>
</comment>
<comment type="subcellular location">
    <molecule>Nucleocapsid protein p7</molecule>
    <subcellularLocation>
        <location evidence="6">Virion</location>
    </subcellularLocation>
</comment>
<comment type="alternative products">
    <event type="ribosomal frameshifting"/>
    <isoform>
        <id>P24736-1</id>
        <name>Gag polyprotein</name>
        <sequence type="displayed"/>
    </isoform>
    <isoform>
        <id>P24740-1</id>
        <name>Gag-Pol polyprotein</name>
        <sequence type="external"/>
    </isoform>
    <text>Translation results in the formation of the Gag polyprotein most of the time. Ribosomal frameshifting at the gag-pol genes boundary occurs at low frequency and produces the Gag-Pol polyprotein. This strategy of translation probably allows the virus to modulate the quantity of each viral protein. Maintenance of a correct Gag to Gag-Pol ratio is essential for RNA dimerization and viral infectivity.</text>
</comment>
<comment type="domain">
    <text evidence="6">Late-budding domains (L domains) are short sequence motifs essential for viral particle budding. They recruit proteins of the host ESCRT machinery (Endosomal Sorting Complex Required for Transport) or ESCRT-associated proteins. p6-gag contains two L domains: a PTAP/PSAP motif, which interacts with the UEV domain of TSG101 and a LYPX(n)L motif which interacts with PDCD6IP/AIP1.</text>
</comment>
<comment type="PTM">
    <text evidence="6">Gag-Pol polyprotein: Specific enzymatic cleavages by the viral protease yield mature proteins.</text>
</comment>
<comment type="PTM">
    <molecule>Matrix protein p17</molecule>
    <text evidence="5">Tyrosine phosphorylated presumably in the virion by a host kinase. Phosphorylation is apparently not a major regulator of membrane association.</text>
</comment>
<comment type="PTM">
    <text evidence="6">Capsid protein p24 is phosphorylated possibly by host MAPK1; this phosphorylation is necessary for Pin1-mediated virion uncoating.</text>
</comment>
<comment type="PTM">
    <text evidence="2">Nucleocapsid protein p7 is methylated by host PRMT6, impairing its function by reducing RNA annealing and the initiation of reverse transcription.</text>
</comment>
<comment type="miscellaneous">
    <text>HIV-1 lineages are divided in three main groups, M (for Major), O (for Outlier), and N (for New, or Non-M, Non-O). The vast majority of strains found worldwide belong to the group M. Group O seems to be endemic to and largely confined to Cameroon and neighboring countries in West Central Africa, where these viruses represent a small minority of HIV-1 strains. The group N is represented by a limited number of isolates from Cameroonian persons. The group M is further subdivided in 9 clades or subtypes (A to D, F to H, J and K).</text>
</comment>
<comment type="miscellaneous">
    <molecule>Isoform Gag polyprotein</molecule>
    <text>Produced by conventional translation.</text>
</comment>
<comment type="similarity">
    <text evidence="10">Belongs to the primate lentivirus group gag polyprotein family.</text>
</comment>
<reference key="1">
    <citation type="journal article" date="1990" name="AIDS Res. Hum. Retroviruses">
        <title>Nucleotide sequence of a Ugandan HIV-1 provirus reveals genetic diversity from other HIV-1 isolates.</title>
        <authorList>
            <person name="Oram J.D."/>
            <person name="Downing R.G."/>
            <person name="Roff M."/>
            <person name="Clegg J.C.S."/>
            <person name="Serwadda D."/>
            <person name="Carswell J.W."/>
        </authorList>
    </citation>
    <scope>NUCLEOTIDE SEQUENCE [GENOMIC DNA]</scope>
</reference>
<reference key="2">
    <citation type="journal article" date="2003" name="Biochim. Biophys. Acta">
        <title>Role of HIV-1 Gag domains in viral assembly.</title>
        <authorList>
            <person name="Scarlata S."/>
            <person name="Carter C."/>
        </authorList>
    </citation>
    <scope>REVIEW</scope>
</reference>
<evidence type="ECO:0000250" key="1"/>
<evidence type="ECO:0000250" key="2">
    <source>
        <dbReference type="UniProtKB" id="P03347"/>
    </source>
</evidence>
<evidence type="ECO:0000250" key="3">
    <source>
        <dbReference type="UniProtKB" id="P03348"/>
    </source>
</evidence>
<evidence type="ECO:0000250" key="4">
    <source>
        <dbReference type="UniProtKB" id="P03349"/>
    </source>
</evidence>
<evidence type="ECO:0000250" key="5">
    <source>
        <dbReference type="UniProtKB" id="P04591"/>
    </source>
</evidence>
<evidence type="ECO:0000250" key="6">
    <source>
        <dbReference type="UniProtKB" id="P12493"/>
    </source>
</evidence>
<evidence type="ECO:0000250" key="7">
    <source>
        <dbReference type="UniProtKB" id="P12497"/>
    </source>
</evidence>
<evidence type="ECO:0000255" key="8">
    <source>
        <dbReference type="PROSITE-ProRule" id="PRU00047"/>
    </source>
</evidence>
<evidence type="ECO:0000256" key="9">
    <source>
        <dbReference type="SAM" id="MobiDB-lite"/>
    </source>
</evidence>
<evidence type="ECO:0000305" key="10"/>
<protein>
    <recommendedName>
        <fullName>Gag polyprotein</fullName>
    </recommendedName>
    <alternativeName>
        <fullName>Pr55Gag</fullName>
    </alternativeName>
    <component>
        <recommendedName>
            <fullName>Matrix protein p17</fullName>
            <shortName>MA</shortName>
        </recommendedName>
    </component>
    <component>
        <recommendedName>
            <fullName>Capsid protein p24</fullName>
            <shortName>CA</shortName>
        </recommendedName>
    </component>
    <component>
        <recommendedName>
            <fullName evidence="6">Spacer peptide 1</fullName>
            <shortName>SP1</shortName>
        </recommendedName>
        <alternativeName>
            <fullName>p2</fullName>
        </alternativeName>
    </component>
    <component>
        <recommendedName>
            <fullName>Nucleocapsid protein p7</fullName>
            <shortName>NC</shortName>
        </recommendedName>
    </component>
    <component>
        <recommendedName>
            <fullName evidence="6">Spacer peptide 2</fullName>
            <shortName>SP2</shortName>
        </recommendedName>
        <alternativeName>
            <fullName>p1</fullName>
        </alternativeName>
    </component>
    <component>
        <recommendedName>
            <fullName>p6-gag</fullName>
        </recommendedName>
    </component>
</protein>
<dbReference type="EMBL" id="M62320">
    <property type="protein sequence ID" value="AAA75018.1"/>
    <property type="molecule type" value="Genomic_DNA"/>
</dbReference>
<dbReference type="PDB" id="1NCP">
    <property type="method" value="NMR"/>
    <property type="chains" value="C=405-422"/>
</dbReference>
<dbReference type="PDBsum" id="1NCP"/>
<dbReference type="SMR" id="P24736"/>
<dbReference type="PRO" id="PR:P24736"/>
<dbReference type="Proteomes" id="UP000134285">
    <property type="component" value="Segment"/>
</dbReference>
<dbReference type="GO" id="GO:0042025">
    <property type="term" value="C:host cell nucleus"/>
    <property type="evidence" value="ECO:0007669"/>
    <property type="project" value="UniProtKB-SubCell"/>
</dbReference>
<dbReference type="GO" id="GO:0020002">
    <property type="term" value="C:host cell plasma membrane"/>
    <property type="evidence" value="ECO:0007669"/>
    <property type="project" value="UniProtKB-SubCell"/>
</dbReference>
<dbReference type="GO" id="GO:0072494">
    <property type="term" value="C:host multivesicular body"/>
    <property type="evidence" value="ECO:0007669"/>
    <property type="project" value="UniProtKB-SubCell"/>
</dbReference>
<dbReference type="GO" id="GO:0016020">
    <property type="term" value="C:membrane"/>
    <property type="evidence" value="ECO:0007669"/>
    <property type="project" value="UniProtKB-KW"/>
</dbReference>
<dbReference type="GO" id="GO:0019013">
    <property type="term" value="C:viral nucleocapsid"/>
    <property type="evidence" value="ECO:0007669"/>
    <property type="project" value="UniProtKB-KW"/>
</dbReference>
<dbReference type="GO" id="GO:0055036">
    <property type="term" value="C:virion membrane"/>
    <property type="evidence" value="ECO:0007669"/>
    <property type="project" value="UniProtKB-SubCell"/>
</dbReference>
<dbReference type="GO" id="GO:0003723">
    <property type="term" value="F:RNA binding"/>
    <property type="evidence" value="ECO:0007669"/>
    <property type="project" value="UniProtKB-KW"/>
</dbReference>
<dbReference type="GO" id="GO:0005198">
    <property type="term" value="F:structural molecule activity"/>
    <property type="evidence" value="ECO:0007669"/>
    <property type="project" value="InterPro"/>
</dbReference>
<dbReference type="GO" id="GO:0008270">
    <property type="term" value="F:zinc ion binding"/>
    <property type="evidence" value="ECO:0007669"/>
    <property type="project" value="UniProtKB-KW"/>
</dbReference>
<dbReference type="GO" id="GO:0039702">
    <property type="term" value="P:viral budding via host ESCRT complex"/>
    <property type="evidence" value="ECO:0007669"/>
    <property type="project" value="UniProtKB-KW"/>
</dbReference>
<dbReference type="GO" id="GO:0075523">
    <property type="term" value="P:viral translational frameshifting"/>
    <property type="evidence" value="ECO:0007669"/>
    <property type="project" value="UniProtKB-KW"/>
</dbReference>
<dbReference type="FunFam" id="1.10.1200.30:FF:000001">
    <property type="entry name" value="Gag polyprotein"/>
    <property type="match status" value="1"/>
</dbReference>
<dbReference type="FunFam" id="1.10.375.10:FF:000001">
    <property type="entry name" value="Gag polyprotein"/>
    <property type="match status" value="1"/>
</dbReference>
<dbReference type="FunFam" id="4.10.60.10:FF:000001">
    <property type="entry name" value="Gag polyprotein"/>
    <property type="match status" value="1"/>
</dbReference>
<dbReference type="Gene3D" id="1.10.1200.30">
    <property type="match status" value="1"/>
</dbReference>
<dbReference type="Gene3D" id="6.10.250.390">
    <property type="match status" value="1"/>
</dbReference>
<dbReference type="Gene3D" id="1.10.375.10">
    <property type="entry name" value="Human Immunodeficiency Virus Type 1 Capsid Protein"/>
    <property type="match status" value="1"/>
</dbReference>
<dbReference type="Gene3D" id="1.10.150.90">
    <property type="entry name" value="Immunodeficiency lentiviruses, gag gene matrix protein p17"/>
    <property type="match status" value="1"/>
</dbReference>
<dbReference type="Gene3D" id="1.20.5.760">
    <property type="entry name" value="Single helix bin"/>
    <property type="match status" value="1"/>
</dbReference>
<dbReference type="Gene3D" id="4.10.60.10">
    <property type="entry name" value="Zinc finger, CCHC-type"/>
    <property type="match status" value="1"/>
</dbReference>
<dbReference type="InterPro" id="IPR045345">
    <property type="entry name" value="Gag_p24_C"/>
</dbReference>
<dbReference type="InterPro" id="IPR014817">
    <property type="entry name" value="Gag_p6"/>
</dbReference>
<dbReference type="InterPro" id="IPR000071">
    <property type="entry name" value="Lentvrl_matrix_N"/>
</dbReference>
<dbReference type="InterPro" id="IPR012344">
    <property type="entry name" value="Matrix_HIV/RSV_N"/>
</dbReference>
<dbReference type="InterPro" id="IPR050195">
    <property type="entry name" value="Primate_lentivir_Gag_pol-like"/>
</dbReference>
<dbReference type="InterPro" id="IPR008916">
    <property type="entry name" value="Retrov_capsid_C"/>
</dbReference>
<dbReference type="InterPro" id="IPR008919">
    <property type="entry name" value="Retrov_capsid_N"/>
</dbReference>
<dbReference type="InterPro" id="IPR010999">
    <property type="entry name" value="Retrovr_matrix"/>
</dbReference>
<dbReference type="InterPro" id="IPR001878">
    <property type="entry name" value="Znf_CCHC"/>
</dbReference>
<dbReference type="InterPro" id="IPR036875">
    <property type="entry name" value="Znf_CCHC_sf"/>
</dbReference>
<dbReference type="PANTHER" id="PTHR40389:SF4">
    <property type="match status" value="1"/>
</dbReference>
<dbReference type="PANTHER" id="PTHR40389">
    <property type="entry name" value="ENDOGENOUS RETROVIRUS GROUP K MEMBER 24 GAG POLYPROTEIN-RELATED"/>
    <property type="match status" value="1"/>
</dbReference>
<dbReference type="Pfam" id="PF00540">
    <property type="entry name" value="Gag_p17"/>
    <property type="match status" value="1"/>
</dbReference>
<dbReference type="Pfam" id="PF00607">
    <property type="entry name" value="Gag_p24"/>
    <property type="match status" value="1"/>
</dbReference>
<dbReference type="Pfam" id="PF19317">
    <property type="entry name" value="Gag_p24_C"/>
    <property type="match status" value="1"/>
</dbReference>
<dbReference type="Pfam" id="PF08705">
    <property type="entry name" value="Gag_p6"/>
    <property type="match status" value="1"/>
</dbReference>
<dbReference type="Pfam" id="PF00098">
    <property type="entry name" value="zf-CCHC"/>
    <property type="match status" value="2"/>
</dbReference>
<dbReference type="PRINTS" id="PR00234">
    <property type="entry name" value="HIV1MATRIX"/>
</dbReference>
<dbReference type="SMART" id="SM00343">
    <property type="entry name" value="ZnF_C2HC"/>
    <property type="match status" value="2"/>
</dbReference>
<dbReference type="SUPFAM" id="SSF47836">
    <property type="entry name" value="Retroviral matrix proteins"/>
    <property type="match status" value="1"/>
</dbReference>
<dbReference type="SUPFAM" id="SSF47353">
    <property type="entry name" value="Retrovirus capsid dimerization domain-like"/>
    <property type="match status" value="1"/>
</dbReference>
<dbReference type="SUPFAM" id="SSF47943">
    <property type="entry name" value="Retrovirus capsid protein, N-terminal core domain"/>
    <property type="match status" value="1"/>
</dbReference>
<dbReference type="SUPFAM" id="SSF57756">
    <property type="entry name" value="Retrovirus zinc finger-like domains"/>
    <property type="match status" value="1"/>
</dbReference>
<dbReference type="PROSITE" id="PS50158">
    <property type="entry name" value="ZF_CCHC"/>
    <property type="match status" value="2"/>
</dbReference>
<sequence length="493" mass="54922">MGARASVLSGKKLDSWEKIRLRPGGNKKYRLKHLVWASRELEKFTLNPGLLETAEGCQQILGQLQPALQTGTEELRSLYNTVAVLYCVHQRIDVKDTKEALNKIEEMQNKNKQRTQQAAANTGSSQNYPIVQNAQGQPVHQALSPRTLNAWVKVVEDKAFSPEVIPMFSALSEGATPQDLNMMLNVVGGHQAAMQMLKDTINEEAAEWDRLHPVHAGPIPPGQMREPRGSDIAGTTSTVQEQIGWMTGNPPIPVGDIYRRWIILGLNKIVRMYSPVSILDIRQGPKEPFRDYVDRFFKTLRAEQATQDVKNWMTETLLVQNANPDCKSILRALGPGATLEEMMTACQGVGGPGHKARVLAEAMSQVQQTSIMMQRGNFRGPRRIKCFNCGKEGHLAKNCRAPRKKGCWKCGKEGHQMKDCTERQANFLGKIWPSNKGRPGNFPQSRPEPTAPPAEIFGMGEKMTSPAKQELKDREQTPLVSLKSLFGNDPLSQ</sequence>
<gene>
    <name type="primary">gag</name>
</gene>
<keyword id="KW-0002">3D-structure</keyword>
<keyword id="KW-0014">AIDS</keyword>
<keyword id="KW-0167">Capsid protein</keyword>
<keyword id="KW-1032">Host cell membrane</keyword>
<keyword id="KW-1035">Host cytoplasm</keyword>
<keyword id="KW-1039">Host endosome</keyword>
<keyword id="KW-1043">Host membrane</keyword>
<keyword id="KW-1048">Host nucleus</keyword>
<keyword id="KW-0945">Host-virus interaction</keyword>
<keyword id="KW-0449">Lipoprotein</keyword>
<keyword id="KW-0472">Membrane</keyword>
<keyword id="KW-0479">Metal-binding</keyword>
<keyword id="KW-0488">Methylation</keyword>
<keyword id="KW-0519">Myristate</keyword>
<keyword id="KW-0597">Phosphoprotein</keyword>
<keyword id="KW-1185">Reference proteome</keyword>
<keyword id="KW-0677">Repeat</keyword>
<keyword id="KW-0688">Ribosomal frameshifting</keyword>
<keyword id="KW-0694">RNA-binding</keyword>
<keyword id="KW-1198">Viral budding</keyword>
<keyword id="KW-1187">Viral budding via the host ESCRT complexes</keyword>
<keyword id="KW-0543">Viral nucleoprotein</keyword>
<keyword id="KW-1188">Viral release from host cell</keyword>
<keyword id="KW-0946">Virion</keyword>
<keyword id="KW-0862">Zinc</keyword>
<keyword id="KW-0863">Zinc-finger</keyword>
<feature type="initiator methionine" description="Removed; by host" evidence="1">
    <location>
        <position position="1"/>
    </location>
</feature>
<feature type="chain" id="PRO_0000261232" description="Gag polyprotein">
    <location>
        <begin position="2"/>
        <end position="493"/>
    </location>
</feature>
<feature type="chain" id="PRO_0000038583" description="Matrix protein p17" evidence="1">
    <location>
        <begin position="2"/>
        <end position="128"/>
    </location>
</feature>
<feature type="chain" id="PRO_0000038584" description="Capsid protein p24" evidence="1">
    <location>
        <begin position="129"/>
        <end position="359"/>
    </location>
</feature>
<feature type="peptide" id="PRO_0000038585" description="Spacer peptide 1" evidence="1">
    <location>
        <begin position="360"/>
        <end position="372"/>
    </location>
</feature>
<feature type="chain" id="PRO_0000038586" description="Nucleocapsid protein p7" evidence="1">
    <location>
        <begin position="373"/>
        <end position="426"/>
    </location>
</feature>
<feature type="peptide" id="PRO_0000038587" description="Spacer peptide 2" evidence="1">
    <location>
        <begin position="427"/>
        <end position="442"/>
    </location>
</feature>
<feature type="chain" id="PRO_0000038588" description="p6-gag" evidence="1">
    <location>
        <begin position="443"/>
        <end position="493"/>
    </location>
</feature>
<feature type="zinc finger region" description="CCHC-type 1" evidence="8">
    <location>
        <begin position="384"/>
        <end position="401"/>
    </location>
</feature>
<feature type="zinc finger region" description="CCHC-type 2" evidence="8">
    <location>
        <begin position="405"/>
        <end position="422"/>
    </location>
</feature>
<feature type="region of interest" description="Interaction with Gp41" evidence="6">
    <location>
        <begin position="7"/>
        <end position="31"/>
    </location>
</feature>
<feature type="region of interest" description="Interaction with host CALM1" evidence="5">
    <location>
        <begin position="8"/>
        <end position="43"/>
    </location>
</feature>
<feature type="region of interest" description="Interaction with host AP3D1" evidence="7">
    <location>
        <begin position="12"/>
        <end position="19"/>
    </location>
</feature>
<feature type="region of interest" description="Interaction with membrane phosphatidylinositol 4,5-bisphosphate and RNA" evidence="6">
    <location>
        <begin position="14"/>
        <end position="33"/>
    </location>
</feature>
<feature type="region of interest" description="Interaction with membrane phosphatidylinositol 4,5-bisphosphate" evidence="6">
    <location>
        <begin position="73"/>
        <end position="77"/>
    </location>
</feature>
<feature type="region of interest" description="Disordered" evidence="9">
    <location>
        <begin position="108"/>
        <end position="130"/>
    </location>
</feature>
<feature type="region of interest" description="Interaction with host PPIA/CYPA and NUP153" evidence="6">
    <location>
        <begin position="185"/>
        <end position="223"/>
    </location>
</feature>
<feature type="region of interest" description="PPIA/CYPA-binding loop" evidence="5">
    <location>
        <begin position="213"/>
        <end position="221"/>
    </location>
</feature>
<feature type="region of interest" description="Dimerization/Multimerization of capsid protein p24" evidence="5">
    <location>
        <begin position="273"/>
        <end position="359"/>
    </location>
</feature>
<feature type="region of interest" description="Disordered" evidence="9">
    <location>
        <begin position="433"/>
        <end position="493"/>
    </location>
</feature>
<feature type="short sequence motif" description="Nuclear export signal" evidence="1">
    <location>
        <begin position="16"/>
        <end position="22"/>
    </location>
</feature>
<feature type="short sequence motif" description="Nuclear localization signal" evidence="1">
    <location>
        <begin position="26"/>
        <end position="32"/>
    </location>
</feature>
<feature type="short sequence motif" description="PTAP/PSAP motif">
    <location>
        <begin position="449"/>
        <end position="452"/>
    </location>
</feature>
<feature type="compositionally biased region" description="Polar residues" evidence="9">
    <location>
        <begin position="114"/>
        <end position="130"/>
    </location>
</feature>
<feature type="site" description="Cleavage; by viral protease" evidence="1">
    <location>
        <begin position="128"/>
        <end position="129"/>
    </location>
</feature>
<feature type="site" description="Cleavage; by viral protease" evidence="1">
    <location>
        <begin position="359"/>
        <end position="360"/>
    </location>
</feature>
<feature type="site" description="Cleavage; by viral protease" evidence="1">
    <location>
        <begin position="372"/>
        <end position="373"/>
    </location>
</feature>
<feature type="site" description="Cleavage; by viral protease" evidence="1">
    <location>
        <begin position="426"/>
        <end position="427"/>
    </location>
</feature>
<feature type="site" description="Cleavage; by viral protease" evidence="1">
    <location>
        <begin position="442"/>
        <end position="443"/>
    </location>
</feature>
<feature type="modified residue" description="Phosphoserine; by host MAPK1" evidence="6">
    <location>
        <position position="144"/>
    </location>
</feature>
<feature type="modified residue" description="Asymmetric dimethylarginine; in Nucleocapsid protein p7; by host PRMT6" evidence="1">
    <location>
        <position position="382"/>
    </location>
</feature>
<feature type="modified residue" description="Asymmetric dimethylarginine; in Nucleocapsid protein p7; by host PRMT6" evidence="1">
    <location>
        <position position="403"/>
    </location>
</feature>
<feature type="lipid moiety-binding region" description="N-myristoyl glycine; by host" evidence="1">
    <location>
        <position position="2"/>
    </location>
</feature>
<proteinExistence type="evidence at protein level"/>
<name>GAG_HV1U4</name>
<accession>P24736</accession>
<organism>
    <name type="scientific">Human immunodeficiency virus type 1 group M subtype A (isolate U455)</name>
    <name type="common">HIV-1</name>
    <dbReference type="NCBI Taxonomy" id="11703"/>
    <lineage>
        <taxon>Viruses</taxon>
        <taxon>Riboviria</taxon>
        <taxon>Pararnavirae</taxon>
        <taxon>Artverviricota</taxon>
        <taxon>Revtraviricetes</taxon>
        <taxon>Ortervirales</taxon>
        <taxon>Retroviridae</taxon>
        <taxon>Orthoretrovirinae</taxon>
        <taxon>Lentivirus</taxon>
        <taxon>Human immunodeficiency virus type 1</taxon>
    </lineage>
</organism>